<sequence>MTVKPELNEITPYLQFNRQEWGNFRKDTPLTLTESDLDKLQGQIEIVSLKEVTEIYLPLSRLLSFYVTARQTLQQATYQFLGKPEPKVPYIIGIAGSVAVGKSTTSRVLKALLSRWPDHPNVEVITTDGFLYSNAKLEKQGLMKRKGFPESYDMPSLLRVLNAIKSGQRNVRIPVYSHHYYDIVRGQYEIVDQPDIVILEGLNILQTGVRKTLQQLQVFVSDFFDFSLFVDAQAQVIQKWYIDRVLSFWRTTFKDPHSYFHYLTQMSETEAAAFAKHVWNEINKVNLMENILPYKNRAQLILEKAADHSIQKVYLRKI</sequence>
<feature type="chain" id="PRO_1000078055" description="Pantothenate kinase">
    <location>
        <begin position="1"/>
        <end position="318"/>
    </location>
</feature>
<feature type="binding site" evidence="1">
    <location>
        <begin position="96"/>
        <end position="103"/>
    </location>
    <ligand>
        <name>ATP</name>
        <dbReference type="ChEBI" id="CHEBI:30616"/>
    </ligand>
</feature>
<proteinExistence type="inferred from homology"/>
<reference key="1">
    <citation type="journal article" date="2009" name="Infect. Immun.">
        <title>Comparative genomics reveal extensive transposon-mediated genomic plasticity and diversity among potential effector proteins within the genus Coxiella.</title>
        <authorList>
            <person name="Beare P.A."/>
            <person name="Unsworth N."/>
            <person name="Andoh M."/>
            <person name="Voth D.E."/>
            <person name="Omsland A."/>
            <person name="Gilk S.D."/>
            <person name="Williams K.P."/>
            <person name="Sobral B.W."/>
            <person name="Kupko J.J. III"/>
            <person name="Porcella S.F."/>
            <person name="Samuel J.E."/>
            <person name="Heinzen R.A."/>
        </authorList>
    </citation>
    <scope>NUCLEOTIDE SEQUENCE [LARGE SCALE GENOMIC DNA]</scope>
    <source>
        <strain>Dugway 5J108-111</strain>
    </source>
</reference>
<organism>
    <name type="scientific">Coxiella burnetii (strain Dugway 5J108-111)</name>
    <dbReference type="NCBI Taxonomy" id="434922"/>
    <lineage>
        <taxon>Bacteria</taxon>
        <taxon>Pseudomonadati</taxon>
        <taxon>Pseudomonadota</taxon>
        <taxon>Gammaproteobacteria</taxon>
        <taxon>Legionellales</taxon>
        <taxon>Coxiellaceae</taxon>
        <taxon>Coxiella</taxon>
    </lineage>
</organism>
<comment type="catalytic activity">
    <reaction evidence="1">
        <text>(R)-pantothenate + ATP = (R)-4'-phosphopantothenate + ADP + H(+)</text>
        <dbReference type="Rhea" id="RHEA:16373"/>
        <dbReference type="ChEBI" id="CHEBI:10986"/>
        <dbReference type="ChEBI" id="CHEBI:15378"/>
        <dbReference type="ChEBI" id="CHEBI:29032"/>
        <dbReference type="ChEBI" id="CHEBI:30616"/>
        <dbReference type="ChEBI" id="CHEBI:456216"/>
        <dbReference type="EC" id="2.7.1.33"/>
    </reaction>
</comment>
<comment type="pathway">
    <text evidence="1">Cofactor biosynthesis; coenzyme A biosynthesis; CoA from (R)-pantothenate: step 1/5.</text>
</comment>
<comment type="subcellular location">
    <subcellularLocation>
        <location evidence="1">Cytoplasm</location>
    </subcellularLocation>
</comment>
<comment type="similarity">
    <text evidence="1">Belongs to the prokaryotic pantothenate kinase family.</text>
</comment>
<dbReference type="EC" id="2.7.1.33" evidence="1"/>
<dbReference type="EMBL" id="CP000733">
    <property type="protein sequence ID" value="ABS76537.1"/>
    <property type="molecule type" value="Genomic_DNA"/>
</dbReference>
<dbReference type="RefSeq" id="WP_011997309.1">
    <property type="nucleotide sequence ID" value="NC_009727.1"/>
</dbReference>
<dbReference type="SMR" id="A9KD67"/>
<dbReference type="KEGG" id="cbd:CBUD_1896"/>
<dbReference type="HOGENOM" id="CLU_053818_1_1_6"/>
<dbReference type="UniPathway" id="UPA00241">
    <property type="reaction ID" value="UER00352"/>
</dbReference>
<dbReference type="Proteomes" id="UP000008555">
    <property type="component" value="Chromosome"/>
</dbReference>
<dbReference type="GO" id="GO:0005737">
    <property type="term" value="C:cytoplasm"/>
    <property type="evidence" value="ECO:0007669"/>
    <property type="project" value="UniProtKB-SubCell"/>
</dbReference>
<dbReference type="GO" id="GO:0005524">
    <property type="term" value="F:ATP binding"/>
    <property type="evidence" value="ECO:0007669"/>
    <property type="project" value="UniProtKB-UniRule"/>
</dbReference>
<dbReference type="GO" id="GO:0004594">
    <property type="term" value="F:pantothenate kinase activity"/>
    <property type="evidence" value="ECO:0007669"/>
    <property type="project" value="UniProtKB-UniRule"/>
</dbReference>
<dbReference type="GO" id="GO:0015937">
    <property type="term" value="P:coenzyme A biosynthetic process"/>
    <property type="evidence" value="ECO:0007669"/>
    <property type="project" value="UniProtKB-UniRule"/>
</dbReference>
<dbReference type="CDD" id="cd02025">
    <property type="entry name" value="PanK"/>
    <property type="match status" value="1"/>
</dbReference>
<dbReference type="FunFam" id="3.40.50.300:FF:000242">
    <property type="entry name" value="Pantothenate kinase"/>
    <property type="match status" value="1"/>
</dbReference>
<dbReference type="Gene3D" id="3.40.50.300">
    <property type="entry name" value="P-loop containing nucleotide triphosphate hydrolases"/>
    <property type="match status" value="1"/>
</dbReference>
<dbReference type="HAMAP" id="MF_00215">
    <property type="entry name" value="Pantothen_kinase_1"/>
    <property type="match status" value="1"/>
</dbReference>
<dbReference type="InterPro" id="IPR027417">
    <property type="entry name" value="P-loop_NTPase"/>
</dbReference>
<dbReference type="InterPro" id="IPR004566">
    <property type="entry name" value="PanK"/>
</dbReference>
<dbReference type="InterPro" id="IPR006083">
    <property type="entry name" value="PRK/URK"/>
</dbReference>
<dbReference type="NCBIfam" id="TIGR00554">
    <property type="entry name" value="panK_bact"/>
    <property type="match status" value="1"/>
</dbReference>
<dbReference type="PANTHER" id="PTHR10285">
    <property type="entry name" value="URIDINE KINASE"/>
    <property type="match status" value="1"/>
</dbReference>
<dbReference type="Pfam" id="PF00485">
    <property type="entry name" value="PRK"/>
    <property type="match status" value="1"/>
</dbReference>
<dbReference type="PIRSF" id="PIRSF000545">
    <property type="entry name" value="Pantothenate_kin"/>
    <property type="match status" value="1"/>
</dbReference>
<dbReference type="SUPFAM" id="SSF52540">
    <property type="entry name" value="P-loop containing nucleoside triphosphate hydrolases"/>
    <property type="match status" value="1"/>
</dbReference>
<name>COAA_COXBN</name>
<accession>A9KD67</accession>
<evidence type="ECO:0000255" key="1">
    <source>
        <dbReference type="HAMAP-Rule" id="MF_00215"/>
    </source>
</evidence>
<gene>
    <name evidence="1" type="primary">coaA</name>
    <name type="ordered locus">CBUD_1896</name>
</gene>
<keyword id="KW-0067">ATP-binding</keyword>
<keyword id="KW-0173">Coenzyme A biosynthesis</keyword>
<keyword id="KW-0963">Cytoplasm</keyword>
<keyword id="KW-0418">Kinase</keyword>
<keyword id="KW-0547">Nucleotide-binding</keyword>
<keyword id="KW-0808">Transferase</keyword>
<protein>
    <recommendedName>
        <fullName evidence="1">Pantothenate kinase</fullName>
        <ecNumber evidence="1">2.7.1.33</ecNumber>
    </recommendedName>
    <alternativeName>
        <fullName evidence="1">Pantothenic acid kinase</fullName>
    </alternativeName>
</protein>